<feature type="chain" id="PRO_0000118331" description="NADH-ubiquinone oxidoreductase chain 6">
    <location>
        <begin position="1"/>
        <end position="185"/>
    </location>
</feature>
<feature type="transmembrane region" description="Helical" evidence="2">
    <location>
        <begin position="3"/>
        <end position="23"/>
    </location>
</feature>
<feature type="transmembrane region" description="Helical" evidence="2">
    <location>
        <begin position="28"/>
        <end position="48"/>
    </location>
</feature>
<feature type="transmembrane region" description="Helical" evidence="2">
    <location>
        <begin position="54"/>
        <end position="74"/>
    </location>
</feature>
<feature type="transmembrane region" description="Helical" evidence="2">
    <location>
        <begin position="87"/>
        <end position="107"/>
    </location>
</feature>
<feature type="transmembrane region" description="Helical" evidence="2">
    <location>
        <begin position="134"/>
        <end position="154"/>
    </location>
</feature>
<accession>O63849</accession>
<name>NU6M_SARGL</name>
<protein>
    <recommendedName>
        <fullName>NADH-ubiquinone oxidoreductase chain 6</fullName>
        <ecNumber>7.1.1.2</ecNumber>
    </recommendedName>
    <alternativeName>
        <fullName>NADH dehydrogenase subunit 6</fullName>
    </alternativeName>
</protein>
<geneLocation type="mitochondrion"/>
<reference key="1">
    <citation type="journal article" date="1998" name="J. Mol. Evol.">
        <title>Mitochondrial DNA of the coral Sarcophyton glaucum contains a gene for a homologue of bacterial MutS: a possible case of gene transfer from the nucleus to the mitochondrion.</title>
        <authorList>
            <person name="Pont-Kingdon G."/>
            <person name="Okada N.A."/>
            <person name="Macfarlane J.L."/>
            <person name="Beagley C.T."/>
            <person name="Watkins-Sims C.D."/>
            <person name="Cavalier-Smith T."/>
            <person name="Clark-Walker G.D."/>
            <person name="Wolstenholme D.R."/>
        </authorList>
    </citation>
    <scope>NUCLEOTIDE SEQUENCE [GENOMIC DNA]</scope>
</reference>
<keyword id="KW-0249">Electron transport</keyword>
<keyword id="KW-0472">Membrane</keyword>
<keyword id="KW-0496">Mitochondrion</keyword>
<keyword id="KW-0520">NAD</keyword>
<keyword id="KW-0679">Respiratory chain</keyword>
<keyword id="KW-1278">Translocase</keyword>
<keyword id="KW-0812">Transmembrane</keyword>
<keyword id="KW-1133">Transmembrane helix</keyword>
<keyword id="KW-0813">Transport</keyword>
<keyword id="KW-0830">Ubiquinone</keyword>
<proteinExistence type="inferred from homology"/>
<evidence type="ECO:0000250" key="1"/>
<evidence type="ECO:0000255" key="2"/>
<evidence type="ECO:0000305" key="3"/>
<comment type="function">
    <text evidence="1">Core subunit of the mitochondrial membrane respiratory chain NADH dehydrogenase (Complex I) that is believed to belong to the minimal assembly required for catalysis. Complex I functions in the transfer of electrons from NADH to the respiratory chain. The immediate electron acceptor for the enzyme is believed to be ubiquinone (By similarity).</text>
</comment>
<comment type="catalytic activity">
    <reaction>
        <text>a ubiquinone + NADH + 5 H(+)(in) = a ubiquinol + NAD(+) + 4 H(+)(out)</text>
        <dbReference type="Rhea" id="RHEA:29091"/>
        <dbReference type="Rhea" id="RHEA-COMP:9565"/>
        <dbReference type="Rhea" id="RHEA-COMP:9566"/>
        <dbReference type="ChEBI" id="CHEBI:15378"/>
        <dbReference type="ChEBI" id="CHEBI:16389"/>
        <dbReference type="ChEBI" id="CHEBI:17976"/>
        <dbReference type="ChEBI" id="CHEBI:57540"/>
        <dbReference type="ChEBI" id="CHEBI:57945"/>
        <dbReference type="EC" id="7.1.1.2"/>
    </reaction>
</comment>
<comment type="subcellular location">
    <subcellularLocation>
        <location evidence="3">Mitochondrion membrane</location>
        <topology evidence="3">Multi-pass membrane protein</topology>
    </subcellularLocation>
</comment>
<comment type="similarity">
    <text evidence="3">Belongs to the complex I subunit 6 family.</text>
</comment>
<gene>
    <name type="primary">ND6</name>
</gene>
<sequence>MNSLFMIFSLGIVGASLMVISTPNPVYSVFWLVIAFVNAAVMFISLGLDYIGLIFIIVYVGAIAILFLFVIMLIQQPNKIDSQDHSHFLPIGLSVIFLFYSLLTNSPKYISNPVIGSRTNIGAIGSHLYTTYYELVLIASLVLLVAMIGAILLAKQPNSPFLYNSHGESLRSRQDLFLQISREHL</sequence>
<organism>
    <name type="scientific">Sarcophyton glaucum</name>
    <name type="common">Toadstool umbrella leather coral</name>
    <dbReference type="NCBI Taxonomy" id="70919"/>
    <lineage>
        <taxon>Eukaryota</taxon>
        <taxon>Metazoa</taxon>
        <taxon>Cnidaria</taxon>
        <taxon>Anthozoa</taxon>
        <taxon>Octocorallia</taxon>
        <taxon>Malacalcyonacea</taxon>
        <taxon>Alcyoniidae</taxon>
        <taxon>Sarcophyton</taxon>
    </lineage>
</organism>
<dbReference type="EC" id="7.1.1.2"/>
<dbReference type="EMBL" id="AF063191">
    <property type="protein sequence ID" value="AAC16383.1"/>
    <property type="molecule type" value="Genomic_DNA"/>
</dbReference>
<dbReference type="SMR" id="O63849"/>
<dbReference type="GO" id="GO:0031966">
    <property type="term" value="C:mitochondrial membrane"/>
    <property type="evidence" value="ECO:0007669"/>
    <property type="project" value="UniProtKB-SubCell"/>
</dbReference>
<dbReference type="GO" id="GO:0008137">
    <property type="term" value="F:NADH dehydrogenase (ubiquinone) activity"/>
    <property type="evidence" value="ECO:0007669"/>
    <property type="project" value="UniProtKB-EC"/>
</dbReference>
<dbReference type="Gene3D" id="1.20.120.1200">
    <property type="entry name" value="NADH-ubiquinone/plastoquinone oxidoreductase chain 6, subunit NuoJ"/>
    <property type="match status" value="1"/>
</dbReference>
<dbReference type="InterPro" id="IPR001457">
    <property type="entry name" value="NADH_UbQ/plastoQ_OxRdtase_su6"/>
</dbReference>
<dbReference type="InterPro" id="IPR042106">
    <property type="entry name" value="Nuo/plastoQ_OxRdtase_6_NuoJ"/>
</dbReference>
<dbReference type="PANTHER" id="PTHR33269">
    <property type="entry name" value="NADH-UBIQUINONE OXIDOREDUCTASE CHAIN 6"/>
    <property type="match status" value="1"/>
</dbReference>
<dbReference type="PANTHER" id="PTHR33269:SF17">
    <property type="entry name" value="NADH-UBIQUINONE OXIDOREDUCTASE CHAIN 6"/>
    <property type="match status" value="1"/>
</dbReference>
<dbReference type="Pfam" id="PF00499">
    <property type="entry name" value="Oxidored_q3"/>
    <property type="match status" value="1"/>
</dbReference>